<feature type="chain" id="PRO_1000213312" description="2-isopropylmalate synthase">
    <location>
        <begin position="1"/>
        <end position="523"/>
    </location>
</feature>
<feature type="domain" description="Pyruvate carboxyltransferase" evidence="1">
    <location>
        <begin position="5"/>
        <end position="267"/>
    </location>
</feature>
<feature type="region of interest" description="Regulatory domain" evidence="1">
    <location>
        <begin position="392"/>
        <end position="523"/>
    </location>
</feature>
<feature type="binding site" evidence="1">
    <location>
        <position position="14"/>
    </location>
    <ligand>
        <name>Mn(2+)</name>
        <dbReference type="ChEBI" id="CHEBI:29035"/>
    </ligand>
</feature>
<feature type="binding site" evidence="1">
    <location>
        <position position="202"/>
    </location>
    <ligand>
        <name>Mn(2+)</name>
        <dbReference type="ChEBI" id="CHEBI:29035"/>
    </ligand>
</feature>
<feature type="binding site" evidence="1">
    <location>
        <position position="204"/>
    </location>
    <ligand>
        <name>Mn(2+)</name>
        <dbReference type="ChEBI" id="CHEBI:29035"/>
    </ligand>
</feature>
<feature type="binding site" evidence="1">
    <location>
        <position position="238"/>
    </location>
    <ligand>
        <name>Mn(2+)</name>
        <dbReference type="ChEBI" id="CHEBI:29035"/>
    </ligand>
</feature>
<accession>C4ZPZ7</accession>
<evidence type="ECO:0000255" key="1">
    <source>
        <dbReference type="HAMAP-Rule" id="MF_01025"/>
    </source>
</evidence>
<dbReference type="EC" id="2.3.3.13" evidence="1"/>
<dbReference type="EMBL" id="CP001396">
    <property type="protein sequence ID" value="ACR61768.1"/>
    <property type="molecule type" value="Genomic_DNA"/>
</dbReference>
<dbReference type="RefSeq" id="WP_000082850.1">
    <property type="nucleotide sequence ID" value="NC_012759.1"/>
</dbReference>
<dbReference type="SMR" id="C4ZPZ7"/>
<dbReference type="KEGG" id="ebw:BWG_0070"/>
<dbReference type="HOGENOM" id="CLU_022158_0_1_6"/>
<dbReference type="UniPathway" id="UPA00048">
    <property type="reaction ID" value="UER00070"/>
</dbReference>
<dbReference type="GO" id="GO:0005829">
    <property type="term" value="C:cytosol"/>
    <property type="evidence" value="ECO:0007669"/>
    <property type="project" value="TreeGrafter"/>
</dbReference>
<dbReference type="GO" id="GO:0003852">
    <property type="term" value="F:2-isopropylmalate synthase activity"/>
    <property type="evidence" value="ECO:0007669"/>
    <property type="project" value="UniProtKB-UniRule"/>
</dbReference>
<dbReference type="GO" id="GO:0003985">
    <property type="term" value="F:acetyl-CoA C-acetyltransferase activity"/>
    <property type="evidence" value="ECO:0007669"/>
    <property type="project" value="UniProtKB-UniRule"/>
</dbReference>
<dbReference type="GO" id="GO:0030145">
    <property type="term" value="F:manganese ion binding"/>
    <property type="evidence" value="ECO:0007669"/>
    <property type="project" value="UniProtKB-UniRule"/>
</dbReference>
<dbReference type="GO" id="GO:0009098">
    <property type="term" value="P:L-leucine biosynthetic process"/>
    <property type="evidence" value="ECO:0007669"/>
    <property type="project" value="UniProtKB-UniRule"/>
</dbReference>
<dbReference type="CDD" id="cd07940">
    <property type="entry name" value="DRE_TIM_IPMS"/>
    <property type="match status" value="1"/>
</dbReference>
<dbReference type="FunFam" id="1.10.238.260:FF:000001">
    <property type="entry name" value="2-isopropylmalate synthase"/>
    <property type="match status" value="1"/>
</dbReference>
<dbReference type="FunFam" id="3.20.20.70:FF:000010">
    <property type="entry name" value="2-isopropylmalate synthase"/>
    <property type="match status" value="1"/>
</dbReference>
<dbReference type="FunFam" id="3.30.160.270:FF:000001">
    <property type="entry name" value="2-isopropylmalate synthase"/>
    <property type="match status" value="1"/>
</dbReference>
<dbReference type="Gene3D" id="1.10.238.260">
    <property type="match status" value="1"/>
</dbReference>
<dbReference type="Gene3D" id="3.30.160.270">
    <property type="match status" value="1"/>
</dbReference>
<dbReference type="Gene3D" id="3.20.20.70">
    <property type="entry name" value="Aldolase class I"/>
    <property type="match status" value="1"/>
</dbReference>
<dbReference type="HAMAP" id="MF_01025">
    <property type="entry name" value="LeuA_type1"/>
    <property type="match status" value="1"/>
</dbReference>
<dbReference type="InterPro" id="IPR050073">
    <property type="entry name" value="2-IPM_HCS-like"/>
</dbReference>
<dbReference type="InterPro" id="IPR013709">
    <property type="entry name" value="2-isopropylmalate_synth_dimer"/>
</dbReference>
<dbReference type="InterPro" id="IPR002034">
    <property type="entry name" value="AIPM/Hcit_synth_CS"/>
</dbReference>
<dbReference type="InterPro" id="IPR013785">
    <property type="entry name" value="Aldolase_TIM"/>
</dbReference>
<dbReference type="InterPro" id="IPR054691">
    <property type="entry name" value="LeuA/HCS_post-cat"/>
</dbReference>
<dbReference type="InterPro" id="IPR036230">
    <property type="entry name" value="LeuA_allosteric_dom_sf"/>
</dbReference>
<dbReference type="InterPro" id="IPR005671">
    <property type="entry name" value="LeuA_bact_synth"/>
</dbReference>
<dbReference type="InterPro" id="IPR000891">
    <property type="entry name" value="PYR_CT"/>
</dbReference>
<dbReference type="NCBIfam" id="TIGR00973">
    <property type="entry name" value="leuA_bact"/>
    <property type="match status" value="1"/>
</dbReference>
<dbReference type="NCBIfam" id="NF002084">
    <property type="entry name" value="PRK00915.1-1"/>
    <property type="match status" value="1"/>
</dbReference>
<dbReference type="NCBIfam" id="NF002086">
    <property type="entry name" value="PRK00915.1-3"/>
    <property type="match status" value="1"/>
</dbReference>
<dbReference type="PANTHER" id="PTHR10277:SF9">
    <property type="entry name" value="2-ISOPROPYLMALATE SYNTHASE 1, CHLOROPLASTIC-RELATED"/>
    <property type="match status" value="1"/>
</dbReference>
<dbReference type="PANTHER" id="PTHR10277">
    <property type="entry name" value="HOMOCITRATE SYNTHASE-RELATED"/>
    <property type="match status" value="1"/>
</dbReference>
<dbReference type="Pfam" id="PF22617">
    <property type="entry name" value="HCS_D2"/>
    <property type="match status" value="1"/>
</dbReference>
<dbReference type="Pfam" id="PF00682">
    <property type="entry name" value="HMGL-like"/>
    <property type="match status" value="1"/>
</dbReference>
<dbReference type="Pfam" id="PF08502">
    <property type="entry name" value="LeuA_dimer"/>
    <property type="match status" value="1"/>
</dbReference>
<dbReference type="SMART" id="SM00917">
    <property type="entry name" value="LeuA_dimer"/>
    <property type="match status" value="1"/>
</dbReference>
<dbReference type="SUPFAM" id="SSF110921">
    <property type="entry name" value="2-isopropylmalate synthase LeuA, allosteric (dimerisation) domain"/>
    <property type="match status" value="1"/>
</dbReference>
<dbReference type="SUPFAM" id="SSF51569">
    <property type="entry name" value="Aldolase"/>
    <property type="match status" value="1"/>
</dbReference>
<dbReference type="PROSITE" id="PS00815">
    <property type="entry name" value="AIPM_HOMOCIT_SYNTH_1"/>
    <property type="match status" value="1"/>
</dbReference>
<dbReference type="PROSITE" id="PS00816">
    <property type="entry name" value="AIPM_HOMOCIT_SYNTH_2"/>
    <property type="match status" value="1"/>
</dbReference>
<dbReference type="PROSITE" id="PS50991">
    <property type="entry name" value="PYR_CT"/>
    <property type="match status" value="1"/>
</dbReference>
<sequence>MSQQVIIFDTTLRDGEQALQASLSVKEKLQIALALERMGVDVMEVGFPVSSPGDFESVQTIARQVKNSRVCALARCVEKDIDVAAESLKVAEAFRIHTFIATSPMHIATKLRSTLDEVIERAIYMVKRARNYTDDVEFSCEDAGRTPIADLARVVEAAINAGATTINIPDTVGYTMPFEFAGIISGLYERVPNIDKAIISVHTHDDLGLAVGNSLAAVHAGARQVEGAMNGIGERAGNCSLEEVIMAIKVRKDILNVHTAINHQEIWRTSQLVSQICNMPIPANKAIVGSGAFAHSSGIHQDGVLKNRENYEIMTPESIGLNQIQLNLTSRSGRAAVKHRMDEMGYKESEYNLDNLYDAFLKLADKKGQVFDYDLEALAFIGKQQEEPEHFRLDYFSVQSGSNDIATAAVKLACGEEVKAEAANGNGPVDAVYQAINRITEYNVELVKYSLTAKGHGKDALGQVDIVANYNGRRFHGVGLATDIVESSAKAMVHVLNNIWRAAEVEKELQRKAQHNENNKETV</sequence>
<comment type="function">
    <text evidence="1">Catalyzes the condensation of the acetyl group of acetyl-CoA with 3-methyl-2-oxobutanoate (2-ketoisovalerate) to form 3-carboxy-3-hydroxy-4-methylpentanoate (2-isopropylmalate).</text>
</comment>
<comment type="catalytic activity">
    <reaction evidence="1">
        <text>3-methyl-2-oxobutanoate + acetyl-CoA + H2O = (2S)-2-isopropylmalate + CoA + H(+)</text>
        <dbReference type="Rhea" id="RHEA:21524"/>
        <dbReference type="ChEBI" id="CHEBI:1178"/>
        <dbReference type="ChEBI" id="CHEBI:11851"/>
        <dbReference type="ChEBI" id="CHEBI:15377"/>
        <dbReference type="ChEBI" id="CHEBI:15378"/>
        <dbReference type="ChEBI" id="CHEBI:57287"/>
        <dbReference type="ChEBI" id="CHEBI:57288"/>
        <dbReference type="EC" id="2.3.3.13"/>
    </reaction>
</comment>
<comment type="cofactor">
    <cofactor evidence="1">
        <name>Mn(2+)</name>
        <dbReference type="ChEBI" id="CHEBI:29035"/>
    </cofactor>
</comment>
<comment type="pathway">
    <text evidence="1">Amino-acid biosynthesis; L-leucine biosynthesis; L-leucine from 3-methyl-2-oxobutanoate: step 1/4.</text>
</comment>
<comment type="subunit">
    <text evidence="1">Homodimer.</text>
</comment>
<comment type="subcellular location">
    <subcellularLocation>
        <location evidence="1">Cytoplasm</location>
    </subcellularLocation>
</comment>
<comment type="similarity">
    <text evidence="1">Belongs to the alpha-IPM synthase/homocitrate synthase family. LeuA type 1 subfamily.</text>
</comment>
<name>LEU1_ECOBW</name>
<organism>
    <name type="scientific">Escherichia coli (strain K12 / MC4100 / BW2952)</name>
    <dbReference type="NCBI Taxonomy" id="595496"/>
    <lineage>
        <taxon>Bacteria</taxon>
        <taxon>Pseudomonadati</taxon>
        <taxon>Pseudomonadota</taxon>
        <taxon>Gammaproteobacteria</taxon>
        <taxon>Enterobacterales</taxon>
        <taxon>Enterobacteriaceae</taxon>
        <taxon>Escherichia</taxon>
    </lineage>
</organism>
<reference key="1">
    <citation type="journal article" date="2009" name="J. Bacteriol.">
        <title>Genomic sequencing reveals regulatory mutations and recombinational events in the widely used MC4100 lineage of Escherichia coli K-12.</title>
        <authorList>
            <person name="Ferenci T."/>
            <person name="Zhou Z."/>
            <person name="Betteridge T."/>
            <person name="Ren Y."/>
            <person name="Liu Y."/>
            <person name="Feng L."/>
            <person name="Reeves P.R."/>
            <person name="Wang L."/>
        </authorList>
    </citation>
    <scope>NUCLEOTIDE SEQUENCE [LARGE SCALE GENOMIC DNA]</scope>
    <source>
        <strain>K12 / MC4100 / BW2952</strain>
    </source>
</reference>
<protein>
    <recommendedName>
        <fullName evidence="1">2-isopropylmalate synthase</fullName>
        <ecNumber evidence="1">2.3.3.13</ecNumber>
    </recommendedName>
    <alternativeName>
        <fullName evidence="1">Alpha-IPM synthase</fullName>
    </alternativeName>
    <alternativeName>
        <fullName evidence="1">Alpha-isopropylmalate synthase</fullName>
    </alternativeName>
</protein>
<gene>
    <name evidence="1" type="primary">leuA</name>
    <name type="ordered locus">BWG_0070</name>
</gene>
<keyword id="KW-0028">Amino-acid biosynthesis</keyword>
<keyword id="KW-0100">Branched-chain amino acid biosynthesis</keyword>
<keyword id="KW-0963">Cytoplasm</keyword>
<keyword id="KW-0432">Leucine biosynthesis</keyword>
<keyword id="KW-0464">Manganese</keyword>
<keyword id="KW-0479">Metal-binding</keyword>
<keyword id="KW-0808">Transferase</keyword>
<proteinExistence type="inferred from homology"/>